<comment type="function">
    <text evidence="1">Catalyzes the transfer of a methyl group from 5-methyltetrahydrofolate to homocysteine resulting in methionine formation.</text>
</comment>
<comment type="catalytic activity">
    <reaction evidence="1">
        <text>5-methyltetrahydropteroyltri-L-glutamate + L-homocysteine = tetrahydropteroyltri-L-glutamate + L-methionine</text>
        <dbReference type="Rhea" id="RHEA:21196"/>
        <dbReference type="ChEBI" id="CHEBI:57844"/>
        <dbReference type="ChEBI" id="CHEBI:58140"/>
        <dbReference type="ChEBI" id="CHEBI:58199"/>
        <dbReference type="ChEBI" id="CHEBI:58207"/>
        <dbReference type="EC" id="2.1.1.14"/>
    </reaction>
</comment>
<comment type="cofactor">
    <cofactor evidence="1">
        <name>Zn(2+)</name>
        <dbReference type="ChEBI" id="CHEBI:29105"/>
    </cofactor>
    <text evidence="1">Binds 1 zinc ion per subunit.</text>
</comment>
<comment type="pathway">
    <text evidence="1">Amino-acid biosynthesis; L-methionine biosynthesis via de novo pathway; L-methionine from L-homocysteine (MetE route): step 1/1.</text>
</comment>
<comment type="similarity">
    <text evidence="1">Belongs to the vitamin-B12 independent methionine synthase family.</text>
</comment>
<name>METE_MARN8</name>
<evidence type="ECO:0000255" key="1">
    <source>
        <dbReference type="HAMAP-Rule" id="MF_00172"/>
    </source>
</evidence>
<accession>A1TYT7</accession>
<proteinExistence type="inferred from homology"/>
<keyword id="KW-0028">Amino-acid biosynthesis</keyword>
<keyword id="KW-0479">Metal-binding</keyword>
<keyword id="KW-0486">Methionine biosynthesis</keyword>
<keyword id="KW-0489">Methyltransferase</keyword>
<keyword id="KW-0677">Repeat</keyword>
<keyword id="KW-0808">Transferase</keyword>
<keyword id="KW-0862">Zinc</keyword>
<dbReference type="EC" id="2.1.1.14" evidence="1"/>
<dbReference type="EMBL" id="CP000514">
    <property type="protein sequence ID" value="ABM17906.1"/>
    <property type="molecule type" value="Genomic_DNA"/>
</dbReference>
<dbReference type="RefSeq" id="WP_011784328.1">
    <property type="nucleotide sequence ID" value="NC_008740.1"/>
</dbReference>
<dbReference type="SMR" id="A1TYT7"/>
<dbReference type="STRING" id="351348.Maqu_0809"/>
<dbReference type="KEGG" id="maq:Maqu_0809"/>
<dbReference type="eggNOG" id="COG0620">
    <property type="taxonomic scope" value="Bacteria"/>
</dbReference>
<dbReference type="HOGENOM" id="CLU_013175_0_0_6"/>
<dbReference type="OrthoDB" id="244285at2"/>
<dbReference type="UniPathway" id="UPA00051">
    <property type="reaction ID" value="UER00082"/>
</dbReference>
<dbReference type="Proteomes" id="UP000000998">
    <property type="component" value="Chromosome"/>
</dbReference>
<dbReference type="GO" id="GO:0003871">
    <property type="term" value="F:5-methyltetrahydropteroyltriglutamate-homocysteine S-methyltransferase activity"/>
    <property type="evidence" value="ECO:0007669"/>
    <property type="project" value="UniProtKB-UniRule"/>
</dbReference>
<dbReference type="GO" id="GO:0008270">
    <property type="term" value="F:zinc ion binding"/>
    <property type="evidence" value="ECO:0007669"/>
    <property type="project" value="InterPro"/>
</dbReference>
<dbReference type="GO" id="GO:0009086">
    <property type="term" value="P:methionine biosynthetic process"/>
    <property type="evidence" value="ECO:0007669"/>
    <property type="project" value="UniProtKB-UniRule"/>
</dbReference>
<dbReference type="GO" id="GO:0032259">
    <property type="term" value="P:methylation"/>
    <property type="evidence" value="ECO:0007669"/>
    <property type="project" value="UniProtKB-KW"/>
</dbReference>
<dbReference type="CDD" id="cd03311">
    <property type="entry name" value="CIMS_C_terminal_like"/>
    <property type="match status" value="1"/>
</dbReference>
<dbReference type="CDD" id="cd03312">
    <property type="entry name" value="CIMS_N_terminal_like"/>
    <property type="match status" value="1"/>
</dbReference>
<dbReference type="FunFam" id="3.20.20.210:FF:000002">
    <property type="entry name" value="5-methyltetrahydropteroyltriglutamate--homocysteine methyltransferase"/>
    <property type="match status" value="1"/>
</dbReference>
<dbReference type="FunFam" id="3.20.20.210:FF:000003">
    <property type="entry name" value="5-methyltetrahydropteroyltriglutamate--homocysteine methyltransferase"/>
    <property type="match status" value="1"/>
</dbReference>
<dbReference type="Gene3D" id="3.20.20.210">
    <property type="match status" value="2"/>
</dbReference>
<dbReference type="HAMAP" id="MF_00172">
    <property type="entry name" value="Meth_synth"/>
    <property type="match status" value="1"/>
</dbReference>
<dbReference type="InterPro" id="IPR013215">
    <property type="entry name" value="Cbl-indep_Met_Synth_N"/>
</dbReference>
<dbReference type="InterPro" id="IPR006276">
    <property type="entry name" value="Cobalamin-indep_Met_synthase"/>
</dbReference>
<dbReference type="InterPro" id="IPR002629">
    <property type="entry name" value="Met_Synth_C/arc"/>
</dbReference>
<dbReference type="InterPro" id="IPR038071">
    <property type="entry name" value="UROD/MetE-like_sf"/>
</dbReference>
<dbReference type="NCBIfam" id="TIGR01371">
    <property type="entry name" value="met_syn_B12ind"/>
    <property type="match status" value="1"/>
</dbReference>
<dbReference type="NCBIfam" id="NF003556">
    <property type="entry name" value="PRK05222.1"/>
    <property type="match status" value="1"/>
</dbReference>
<dbReference type="PANTHER" id="PTHR30519">
    <property type="entry name" value="5-METHYLTETRAHYDROPTEROYLTRIGLUTAMATE--HOMOCYSTEINE METHYLTRANSFERASE"/>
    <property type="match status" value="1"/>
</dbReference>
<dbReference type="Pfam" id="PF08267">
    <property type="entry name" value="Meth_synt_1"/>
    <property type="match status" value="1"/>
</dbReference>
<dbReference type="Pfam" id="PF01717">
    <property type="entry name" value="Meth_synt_2"/>
    <property type="match status" value="1"/>
</dbReference>
<dbReference type="PIRSF" id="PIRSF000382">
    <property type="entry name" value="MeTrfase_B12_ind"/>
    <property type="match status" value="1"/>
</dbReference>
<dbReference type="SUPFAM" id="SSF51726">
    <property type="entry name" value="UROD/MetE-like"/>
    <property type="match status" value="2"/>
</dbReference>
<organism>
    <name type="scientific">Marinobacter nauticus (strain ATCC 700491 / DSM 11845 / VT8)</name>
    <name type="common">Marinobacter aquaeolei</name>
    <dbReference type="NCBI Taxonomy" id="351348"/>
    <lineage>
        <taxon>Bacteria</taxon>
        <taxon>Pseudomonadati</taxon>
        <taxon>Pseudomonadota</taxon>
        <taxon>Gammaproteobacteria</taxon>
        <taxon>Pseudomonadales</taxon>
        <taxon>Marinobacteraceae</taxon>
        <taxon>Marinobacter</taxon>
    </lineage>
</organism>
<gene>
    <name evidence="1" type="primary">metE</name>
    <name type="ordered locus">Maqu_0809</name>
</gene>
<feature type="chain" id="PRO_1000017253" description="5-methyltetrahydropteroyltriglutamate--homocysteine methyltransferase">
    <location>
        <begin position="1"/>
        <end position="756"/>
    </location>
</feature>
<feature type="active site" description="Proton donor" evidence="1">
    <location>
        <position position="698"/>
    </location>
</feature>
<feature type="binding site" evidence="1">
    <location>
        <begin position="16"/>
        <end position="19"/>
    </location>
    <ligand>
        <name>5-methyltetrahydropteroyltri-L-glutamate</name>
        <dbReference type="ChEBI" id="CHEBI:58207"/>
    </ligand>
</feature>
<feature type="binding site" evidence="1">
    <location>
        <position position="116"/>
    </location>
    <ligand>
        <name>5-methyltetrahydropteroyltri-L-glutamate</name>
        <dbReference type="ChEBI" id="CHEBI:58207"/>
    </ligand>
</feature>
<feature type="binding site" evidence="1">
    <location>
        <begin position="435"/>
        <end position="437"/>
    </location>
    <ligand>
        <name>L-homocysteine</name>
        <dbReference type="ChEBI" id="CHEBI:58199"/>
    </ligand>
</feature>
<feature type="binding site" evidence="1">
    <location>
        <begin position="435"/>
        <end position="437"/>
    </location>
    <ligand>
        <name>L-methionine</name>
        <dbReference type="ChEBI" id="CHEBI:57844"/>
    </ligand>
</feature>
<feature type="binding site" evidence="1">
    <location>
        <position position="488"/>
    </location>
    <ligand>
        <name>L-homocysteine</name>
        <dbReference type="ChEBI" id="CHEBI:58199"/>
    </ligand>
</feature>
<feature type="binding site" evidence="1">
    <location>
        <position position="488"/>
    </location>
    <ligand>
        <name>L-methionine</name>
        <dbReference type="ChEBI" id="CHEBI:57844"/>
    </ligand>
</feature>
<feature type="binding site" evidence="1">
    <location>
        <begin position="519"/>
        <end position="520"/>
    </location>
    <ligand>
        <name>5-methyltetrahydropteroyltri-L-glutamate</name>
        <dbReference type="ChEBI" id="CHEBI:58207"/>
    </ligand>
</feature>
<feature type="binding site" evidence="1">
    <location>
        <position position="565"/>
    </location>
    <ligand>
        <name>5-methyltetrahydropteroyltri-L-glutamate</name>
        <dbReference type="ChEBI" id="CHEBI:58207"/>
    </ligand>
</feature>
<feature type="binding site" evidence="1">
    <location>
        <position position="603"/>
    </location>
    <ligand>
        <name>L-homocysteine</name>
        <dbReference type="ChEBI" id="CHEBI:58199"/>
    </ligand>
</feature>
<feature type="binding site" evidence="1">
    <location>
        <position position="603"/>
    </location>
    <ligand>
        <name>L-methionine</name>
        <dbReference type="ChEBI" id="CHEBI:57844"/>
    </ligand>
</feature>
<feature type="binding site" evidence="1">
    <location>
        <position position="609"/>
    </location>
    <ligand>
        <name>5-methyltetrahydropteroyltri-L-glutamate</name>
        <dbReference type="ChEBI" id="CHEBI:58207"/>
    </ligand>
</feature>
<feature type="binding site" evidence="1">
    <location>
        <position position="645"/>
    </location>
    <ligand>
        <name>Zn(2+)</name>
        <dbReference type="ChEBI" id="CHEBI:29105"/>
        <note>catalytic</note>
    </ligand>
</feature>
<feature type="binding site" evidence="1">
    <location>
        <position position="647"/>
    </location>
    <ligand>
        <name>Zn(2+)</name>
        <dbReference type="ChEBI" id="CHEBI:29105"/>
        <note>catalytic</note>
    </ligand>
</feature>
<feature type="binding site" evidence="1">
    <location>
        <position position="669"/>
    </location>
    <ligand>
        <name>Zn(2+)</name>
        <dbReference type="ChEBI" id="CHEBI:29105"/>
        <note>catalytic</note>
    </ligand>
</feature>
<feature type="binding site" evidence="1">
    <location>
        <position position="730"/>
    </location>
    <ligand>
        <name>Zn(2+)</name>
        <dbReference type="ChEBI" id="CHEBI:29105"/>
        <note>catalytic</note>
    </ligand>
</feature>
<sequence>MATTHNLGFPRIGGQRELKFALEDYWGGRQTEQELAITAADLRLRHWQQQAGLDYVPVGDFSLYDQVLDMSVTLGNLPIRAASKEGSELDAYFRAARGRGANDSPCCATAAGEMTKWFDTNYHYIVPELTADTHFELNPERLLTQLSEARKQGLNAKPVIIGPVTYLWLGKTSDASNRLDLLERLLPVYSQLLEALADAGAEWVQLDEPALVTDLDANWRYAFNLAYHQLKANRPKLLLATYFGELRDNLQLACELPVAGLHIDAISAPAEVSRVADWLPSHKVLSLGVVNGRNIWKSDLNSTLGWLEPLNEKLGQRLWLAPSCSLLHAPVDLSREQELDSDIRNWLAFAVQKLDELQILARALNEGRSSVRAELADNQLAIDSRRNSHRVTNPEVRKAVASVTPELGNRHSPYPQRIARQRERLNLPAFPTTTIGSFPQTREIRQARLQFRKGELSEQAYIEQMRAEIVRCVEAQEKLGLDVLVHGEPERNDMVEYFGEQLDGYAFTRFGWVQSYGSRCVKPPILFGDIRRPQAMTVEWIRYAQSLTDKPVKGMLTGPVTILNWSFVRDDQPRKDSCLQLALAIREEVQDLEKAGVNIIQIDEAALREGLPLRQSDWATYLEWAINSFRIAANGVDDSTQIHTHMCYSEFNDIIEAIARMDADVITIETSRSDMELLDAFRSFEYPNDIGPGVYDIHSPNIPDKEHIINLMTLAAERIPAERLWINPDCGLKTRKWEEVTPALETMVAAARELRS</sequence>
<reference key="1">
    <citation type="journal article" date="2011" name="Appl. Environ. Microbiol.">
        <title>Genomic potential of Marinobacter aquaeolei, a biogeochemical 'opportunitroph'.</title>
        <authorList>
            <person name="Singer E."/>
            <person name="Webb E.A."/>
            <person name="Nelson W.C."/>
            <person name="Heidelberg J.F."/>
            <person name="Ivanova N."/>
            <person name="Pati A."/>
            <person name="Edwards K.J."/>
        </authorList>
    </citation>
    <scope>NUCLEOTIDE SEQUENCE [LARGE SCALE GENOMIC DNA]</scope>
    <source>
        <strain>ATCC 700491 / DSM 11845 / VT8</strain>
    </source>
</reference>
<protein>
    <recommendedName>
        <fullName evidence="1">5-methyltetrahydropteroyltriglutamate--homocysteine methyltransferase</fullName>
        <ecNumber evidence="1">2.1.1.14</ecNumber>
    </recommendedName>
    <alternativeName>
        <fullName evidence="1">Cobalamin-independent methionine synthase</fullName>
    </alternativeName>
    <alternativeName>
        <fullName evidence="1">Methionine synthase, vitamin-B12 independent isozyme</fullName>
    </alternativeName>
</protein>